<organism>
    <name type="scientific">Mus musculus</name>
    <name type="common">Mouse</name>
    <dbReference type="NCBI Taxonomy" id="10090"/>
    <lineage>
        <taxon>Eukaryota</taxon>
        <taxon>Metazoa</taxon>
        <taxon>Chordata</taxon>
        <taxon>Craniata</taxon>
        <taxon>Vertebrata</taxon>
        <taxon>Euteleostomi</taxon>
        <taxon>Mammalia</taxon>
        <taxon>Eutheria</taxon>
        <taxon>Euarchontoglires</taxon>
        <taxon>Glires</taxon>
        <taxon>Rodentia</taxon>
        <taxon>Myomorpha</taxon>
        <taxon>Muroidea</taxon>
        <taxon>Muridae</taxon>
        <taxon>Murinae</taxon>
        <taxon>Mus</taxon>
        <taxon>Mus</taxon>
    </lineage>
</organism>
<dbReference type="EMBL" id="AF317225">
    <property type="protein sequence ID" value="AAG38597.1"/>
    <property type="molecule type" value="mRNA"/>
</dbReference>
<dbReference type="EMBL" id="AK009739">
    <property type="protein sequence ID" value="BAB26470.1"/>
    <property type="molecule type" value="mRNA"/>
</dbReference>
<dbReference type="EMBL" id="AK142618">
    <property type="protein sequence ID" value="BAE25132.1"/>
    <property type="molecule type" value="mRNA"/>
</dbReference>
<dbReference type="EMBL" id="BC013486">
    <property type="protein sequence ID" value="AAH13486.1"/>
    <property type="molecule type" value="mRNA"/>
</dbReference>
<dbReference type="CCDS" id="CCDS20360.1"/>
<dbReference type="RefSeq" id="NP_075673.1">
    <property type="nucleotide sequence ID" value="NM_023184.4"/>
</dbReference>
<dbReference type="SMR" id="Q9EPW2"/>
<dbReference type="BioGRID" id="211350">
    <property type="interactions" value="18"/>
</dbReference>
<dbReference type="FunCoup" id="Q9EPW2">
    <property type="interactions" value="1963"/>
</dbReference>
<dbReference type="STRING" id="10090.ENSMUSP00000144962"/>
<dbReference type="iPTMnet" id="Q9EPW2"/>
<dbReference type="PhosphoSitePlus" id="Q9EPW2"/>
<dbReference type="PaxDb" id="10090-ENSMUSP00000032174"/>
<dbReference type="ProteomicsDB" id="264768"/>
<dbReference type="Antibodypedia" id="17142">
    <property type="antibodies" value="359 antibodies from 35 providers"/>
</dbReference>
<dbReference type="DNASU" id="66277"/>
<dbReference type="Ensembl" id="ENSMUST00000032174.12">
    <property type="protein sequence ID" value="ENSMUSP00000032174.6"/>
    <property type="gene ID" value="ENSMUSG00000030087.12"/>
</dbReference>
<dbReference type="Ensembl" id="ENSMUST00000113530.4">
    <property type="protein sequence ID" value="ENSMUSP00000109158.2"/>
    <property type="gene ID" value="ENSMUSG00000030087.12"/>
</dbReference>
<dbReference type="Ensembl" id="ENSMUST00000203039.3">
    <property type="protein sequence ID" value="ENSMUSP00000144962.2"/>
    <property type="gene ID" value="ENSMUSG00000030087.12"/>
</dbReference>
<dbReference type="Ensembl" id="ENSMUST00000203607.2">
    <property type="protein sequence ID" value="ENSMUSP00000144808.2"/>
    <property type="gene ID" value="ENSMUSG00000030087.12"/>
</dbReference>
<dbReference type="GeneID" id="66277"/>
<dbReference type="KEGG" id="mmu:66277"/>
<dbReference type="UCSC" id="uc009cxj.1">
    <property type="organism name" value="mouse"/>
</dbReference>
<dbReference type="AGR" id="MGI:1929988"/>
<dbReference type="CTD" id="28999"/>
<dbReference type="MGI" id="MGI:1929988">
    <property type="gene designation" value="Klf15"/>
</dbReference>
<dbReference type="VEuPathDB" id="HostDB:ENSMUSG00000030087"/>
<dbReference type="eggNOG" id="KOG1721">
    <property type="taxonomic scope" value="Eukaryota"/>
</dbReference>
<dbReference type="GeneTree" id="ENSGT00940000156977"/>
<dbReference type="HOGENOM" id="CLU_035818_0_0_1"/>
<dbReference type="InParanoid" id="Q9EPW2"/>
<dbReference type="OMA" id="QAYHMLP"/>
<dbReference type="OrthoDB" id="6365676at2759"/>
<dbReference type="PhylomeDB" id="Q9EPW2"/>
<dbReference type="TreeFam" id="TF350556"/>
<dbReference type="BioGRID-ORCS" id="66277">
    <property type="hits" value="2 hits in 76 CRISPR screens"/>
</dbReference>
<dbReference type="ChiTaRS" id="Cklf">
    <property type="organism name" value="mouse"/>
</dbReference>
<dbReference type="PRO" id="PR:Q9EPW2"/>
<dbReference type="Proteomes" id="UP000000589">
    <property type="component" value="Chromosome 6"/>
</dbReference>
<dbReference type="RNAct" id="Q9EPW2">
    <property type="molecule type" value="protein"/>
</dbReference>
<dbReference type="Bgee" id="ENSMUSG00000030087">
    <property type="expression patterns" value="Expressed in left lobe of liver and 234 other cell types or tissues"/>
</dbReference>
<dbReference type="ExpressionAtlas" id="Q9EPW2">
    <property type="expression patterns" value="baseline and differential"/>
</dbReference>
<dbReference type="GO" id="GO:0016607">
    <property type="term" value="C:nuclear speck"/>
    <property type="evidence" value="ECO:0007669"/>
    <property type="project" value="Ensembl"/>
</dbReference>
<dbReference type="GO" id="GO:0005654">
    <property type="term" value="C:nucleoplasm"/>
    <property type="evidence" value="ECO:0000304"/>
    <property type="project" value="Reactome"/>
</dbReference>
<dbReference type="GO" id="GO:0005634">
    <property type="term" value="C:nucleus"/>
    <property type="evidence" value="ECO:0000314"/>
    <property type="project" value="MGI"/>
</dbReference>
<dbReference type="GO" id="GO:0003677">
    <property type="term" value="F:DNA binding"/>
    <property type="evidence" value="ECO:0000314"/>
    <property type="project" value="MGI"/>
</dbReference>
<dbReference type="GO" id="GO:0001228">
    <property type="term" value="F:DNA-binding transcription activator activity, RNA polymerase II-specific"/>
    <property type="evidence" value="ECO:0007669"/>
    <property type="project" value="Ensembl"/>
</dbReference>
<dbReference type="GO" id="GO:0003700">
    <property type="term" value="F:DNA-binding transcription factor activity"/>
    <property type="evidence" value="ECO:0000314"/>
    <property type="project" value="MGI"/>
</dbReference>
<dbReference type="GO" id="GO:0000978">
    <property type="term" value="F:RNA polymerase II cis-regulatory region sequence-specific DNA binding"/>
    <property type="evidence" value="ECO:0007669"/>
    <property type="project" value="Ensembl"/>
</dbReference>
<dbReference type="GO" id="GO:0000976">
    <property type="term" value="F:transcription cis-regulatory region binding"/>
    <property type="evidence" value="ECO:0000314"/>
    <property type="project" value="UniProtKB"/>
</dbReference>
<dbReference type="GO" id="GO:0008270">
    <property type="term" value="F:zinc ion binding"/>
    <property type="evidence" value="ECO:0007669"/>
    <property type="project" value="UniProtKB-KW"/>
</dbReference>
<dbReference type="GO" id="GO:0014898">
    <property type="term" value="P:cardiac muscle hypertrophy in response to stress"/>
    <property type="evidence" value="ECO:0000315"/>
    <property type="project" value="UniProtKB"/>
</dbReference>
<dbReference type="GO" id="GO:1901653">
    <property type="term" value="P:cellular response to peptide"/>
    <property type="evidence" value="ECO:0007669"/>
    <property type="project" value="Ensembl"/>
</dbReference>
<dbReference type="GO" id="GO:0010001">
    <property type="term" value="P:glial cell differentiation"/>
    <property type="evidence" value="ECO:0000314"/>
    <property type="project" value="MGI"/>
</dbReference>
<dbReference type="GO" id="GO:0001678">
    <property type="term" value="P:intracellular glucose homeostasis"/>
    <property type="evidence" value="ECO:0000314"/>
    <property type="project" value="MGI"/>
</dbReference>
<dbReference type="GO" id="GO:2000757">
    <property type="term" value="P:negative regulation of peptidyl-lysine acetylation"/>
    <property type="evidence" value="ECO:0000315"/>
    <property type="project" value="UniProtKB"/>
</dbReference>
<dbReference type="GO" id="GO:0072112">
    <property type="term" value="P:podocyte differentiation"/>
    <property type="evidence" value="ECO:0000315"/>
    <property type="project" value="UniProtKB"/>
</dbReference>
<dbReference type="GO" id="GO:0046326">
    <property type="term" value="P:positive regulation of D-glucose import"/>
    <property type="evidence" value="ECO:0000314"/>
    <property type="project" value="MGI"/>
</dbReference>
<dbReference type="GO" id="GO:0045893">
    <property type="term" value="P:positive regulation of DNA-templated transcription"/>
    <property type="evidence" value="ECO:0000314"/>
    <property type="project" value="MGI"/>
</dbReference>
<dbReference type="GO" id="GO:0010468">
    <property type="term" value="P:regulation of gene expression"/>
    <property type="evidence" value="ECO:0000315"/>
    <property type="project" value="UniProtKB"/>
</dbReference>
<dbReference type="GO" id="GO:0030111">
    <property type="term" value="P:regulation of Wnt signaling pathway"/>
    <property type="evidence" value="ECO:0000315"/>
    <property type="project" value="MGI"/>
</dbReference>
<dbReference type="GO" id="GO:0032868">
    <property type="term" value="P:response to insulin"/>
    <property type="evidence" value="ECO:0000314"/>
    <property type="project" value="MGI"/>
</dbReference>
<dbReference type="CDD" id="cd21580">
    <property type="entry name" value="KLF15_N"/>
    <property type="match status" value="1"/>
</dbReference>
<dbReference type="FunFam" id="3.30.160.60:FF:000018">
    <property type="entry name" value="Krueppel-like factor 15"/>
    <property type="match status" value="1"/>
</dbReference>
<dbReference type="FunFam" id="3.30.160.60:FF:000368">
    <property type="entry name" value="Krueppel-like factor 15"/>
    <property type="match status" value="1"/>
</dbReference>
<dbReference type="FunFam" id="3.30.160.60:FF:000624">
    <property type="entry name" value="zinc finger protein 697"/>
    <property type="match status" value="1"/>
</dbReference>
<dbReference type="Gene3D" id="3.30.160.60">
    <property type="entry name" value="Classic Zinc Finger"/>
    <property type="match status" value="3"/>
</dbReference>
<dbReference type="InterPro" id="IPR036236">
    <property type="entry name" value="Znf_C2H2_sf"/>
</dbReference>
<dbReference type="InterPro" id="IPR013087">
    <property type="entry name" value="Znf_C2H2_type"/>
</dbReference>
<dbReference type="PANTHER" id="PTHR23235:SF44">
    <property type="entry name" value="KRUEPPEL-LIKE FACTOR 15"/>
    <property type="match status" value="1"/>
</dbReference>
<dbReference type="PANTHER" id="PTHR23235">
    <property type="entry name" value="KRUEPPEL-LIKE TRANSCRIPTION FACTOR"/>
    <property type="match status" value="1"/>
</dbReference>
<dbReference type="Pfam" id="PF00096">
    <property type="entry name" value="zf-C2H2"/>
    <property type="match status" value="3"/>
</dbReference>
<dbReference type="SMART" id="SM00355">
    <property type="entry name" value="ZnF_C2H2"/>
    <property type="match status" value="3"/>
</dbReference>
<dbReference type="SUPFAM" id="SSF57667">
    <property type="entry name" value="beta-beta-alpha zinc fingers"/>
    <property type="match status" value="2"/>
</dbReference>
<dbReference type="PROSITE" id="PS00028">
    <property type="entry name" value="ZINC_FINGER_C2H2_1"/>
    <property type="match status" value="3"/>
</dbReference>
<dbReference type="PROSITE" id="PS50157">
    <property type="entry name" value="ZINC_FINGER_C2H2_2"/>
    <property type="match status" value="3"/>
</dbReference>
<keyword id="KW-0010">Activator</keyword>
<keyword id="KW-0238">DNA-binding</keyword>
<keyword id="KW-0479">Metal-binding</keyword>
<keyword id="KW-0539">Nucleus</keyword>
<keyword id="KW-1185">Reference proteome</keyword>
<keyword id="KW-0677">Repeat</keyword>
<keyword id="KW-0804">Transcription</keyword>
<keyword id="KW-0805">Transcription regulation</keyword>
<keyword id="KW-0862">Zinc</keyword>
<keyword id="KW-0863">Zinc-finger</keyword>
<proteinExistence type="evidence at protein level"/>
<name>KLF15_MOUSE</name>
<accession>Q9EPW2</accession>
<accession>Q3UQB0</accession>
<reference key="1">
    <citation type="journal article" date="2002" name="J. Biol. Chem.">
        <title>The Kruppel-like factor KLF15 regulates the insulin-sensitive glucose transporter GLUT4.</title>
        <authorList>
            <person name="Gray S.J."/>
            <person name="Feinberg M.W."/>
            <person name="Hull S."/>
            <person name="Kuo C.T."/>
            <person name="Watanabe M."/>
            <person name="Sen-Banerjee S."/>
            <person name="DePina A."/>
            <person name="Haspel R."/>
            <person name="Jain M.K."/>
        </authorList>
    </citation>
    <scope>NUCLEOTIDE SEQUENCE [MRNA]</scope>
    <source>
        <strain>BALB/cJ</strain>
    </source>
</reference>
<reference key="2">
    <citation type="journal article" date="2005" name="Science">
        <title>The transcriptional landscape of the mammalian genome.</title>
        <authorList>
            <person name="Carninci P."/>
            <person name="Kasukawa T."/>
            <person name="Katayama S."/>
            <person name="Gough J."/>
            <person name="Frith M.C."/>
            <person name="Maeda N."/>
            <person name="Oyama R."/>
            <person name="Ravasi T."/>
            <person name="Lenhard B."/>
            <person name="Wells C."/>
            <person name="Kodzius R."/>
            <person name="Shimokawa K."/>
            <person name="Bajic V.B."/>
            <person name="Brenner S.E."/>
            <person name="Batalov S."/>
            <person name="Forrest A.R."/>
            <person name="Zavolan M."/>
            <person name="Davis M.J."/>
            <person name="Wilming L.G."/>
            <person name="Aidinis V."/>
            <person name="Allen J.E."/>
            <person name="Ambesi-Impiombato A."/>
            <person name="Apweiler R."/>
            <person name="Aturaliya R.N."/>
            <person name="Bailey T.L."/>
            <person name="Bansal M."/>
            <person name="Baxter L."/>
            <person name="Beisel K.W."/>
            <person name="Bersano T."/>
            <person name="Bono H."/>
            <person name="Chalk A.M."/>
            <person name="Chiu K.P."/>
            <person name="Choudhary V."/>
            <person name="Christoffels A."/>
            <person name="Clutterbuck D.R."/>
            <person name="Crowe M.L."/>
            <person name="Dalla E."/>
            <person name="Dalrymple B.P."/>
            <person name="de Bono B."/>
            <person name="Della Gatta G."/>
            <person name="di Bernardo D."/>
            <person name="Down T."/>
            <person name="Engstrom P."/>
            <person name="Fagiolini M."/>
            <person name="Faulkner G."/>
            <person name="Fletcher C.F."/>
            <person name="Fukushima T."/>
            <person name="Furuno M."/>
            <person name="Futaki S."/>
            <person name="Gariboldi M."/>
            <person name="Georgii-Hemming P."/>
            <person name="Gingeras T.R."/>
            <person name="Gojobori T."/>
            <person name="Green R.E."/>
            <person name="Gustincich S."/>
            <person name="Harbers M."/>
            <person name="Hayashi Y."/>
            <person name="Hensch T.K."/>
            <person name="Hirokawa N."/>
            <person name="Hill D."/>
            <person name="Huminiecki L."/>
            <person name="Iacono M."/>
            <person name="Ikeo K."/>
            <person name="Iwama A."/>
            <person name="Ishikawa T."/>
            <person name="Jakt M."/>
            <person name="Kanapin A."/>
            <person name="Katoh M."/>
            <person name="Kawasawa Y."/>
            <person name="Kelso J."/>
            <person name="Kitamura H."/>
            <person name="Kitano H."/>
            <person name="Kollias G."/>
            <person name="Krishnan S.P."/>
            <person name="Kruger A."/>
            <person name="Kummerfeld S.K."/>
            <person name="Kurochkin I.V."/>
            <person name="Lareau L.F."/>
            <person name="Lazarevic D."/>
            <person name="Lipovich L."/>
            <person name="Liu J."/>
            <person name="Liuni S."/>
            <person name="McWilliam S."/>
            <person name="Madan Babu M."/>
            <person name="Madera M."/>
            <person name="Marchionni L."/>
            <person name="Matsuda H."/>
            <person name="Matsuzawa S."/>
            <person name="Miki H."/>
            <person name="Mignone F."/>
            <person name="Miyake S."/>
            <person name="Morris K."/>
            <person name="Mottagui-Tabar S."/>
            <person name="Mulder N."/>
            <person name="Nakano N."/>
            <person name="Nakauchi H."/>
            <person name="Ng P."/>
            <person name="Nilsson R."/>
            <person name="Nishiguchi S."/>
            <person name="Nishikawa S."/>
            <person name="Nori F."/>
            <person name="Ohara O."/>
            <person name="Okazaki Y."/>
            <person name="Orlando V."/>
            <person name="Pang K.C."/>
            <person name="Pavan W.J."/>
            <person name="Pavesi G."/>
            <person name="Pesole G."/>
            <person name="Petrovsky N."/>
            <person name="Piazza S."/>
            <person name="Reed J."/>
            <person name="Reid J.F."/>
            <person name="Ring B.Z."/>
            <person name="Ringwald M."/>
            <person name="Rost B."/>
            <person name="Ruan Y."/>
            <person name="Salzberg S.L."/>
            <person name="Sandelin A."/>
            <person name="Schneider C."/>
            <person name="Schoenbach C."/>
            <person name="Sekiguchi K."/>
            <person name="Semple C.A."/>
            <person name="Seno S."/>
            <person name="Sessa L."/>
            <person name="Sheng Y."/>
            <person name="Shibata Y."/>
            <person name="Shimada H."/>
            <person name="Shimada K."/>
            <person name="Silva D."/>
            <person name="Sinclair B."/>
            <person name="Sperling S."/>
            <person name="Stupka E."/>
            <person name="Sugiura K."/>
            <person name="Sultana R."/>
            <person name="Takenaka Y."/>
            <person name="Taki K."/>
            <person name="Tammoja K."/>
            <person name="Tan S.L."/>
            <person name="Tang S."/>
            <person name="Taylor M.S."/>
            <person name="Tegner J."/>
            <person name="Teichmann S.A."/>
            <person name="Ueda H.R."/>
            <person name="van Nimwegen E."/>
            <person name="Verardo R."/>
            <person name="Wei C.L."/>
            <person name="Yagi K."/>
            <person name="Yamanishi H."/>
            <person name="Zabarovsky E."/>
            <person name="Zhu S."/>
            <person name="Zimmer A."/>
            <person name="Hide W."/>
            <person name="Bult C."/>
            <person name="Grimmond S.M."/>
            <person name="Teasdale R.D."/>
            <person name="Liu E.T."/>
            <person name="Brusic V."/>
            <person name="Quackenbush J."/>
            <person name="Wahlestedt C."/>
            <person name="Mattick J.S."/>
            <person name="Hume D.A."/>
            <person name="Kai C."/>
            <person name="Sasaki D."/>
            <person name="Tomaru Y."/>
            <person name="Fukuda S."/>
            <person name="Kanamori-Katayama M."/>
            <person name="Suzuki M."/>
            <person name="Aoki J."/>
            <person name="Arakawa T."/>
            <person name="Iida J."/>
            <person name="Imamura K."/>
            <person name="Itoh M."/>
            <person name="Kato T."/>
            <person name="Kawaji H."/>
            <person name="Kawagashira N."/>
            <person name="Kawashima T."/>
            <person name="Kojima M."/>
            <person name="Kondo S."/>
            <person name="Konno H."/>
            <person name="Nakano K."/>
            <person name="Ninomiya N."/>
            <person name="Nishio T."/>
            <person name="Okada M."/>
            <person name="Plessy C."/>
            <person name="Shibata K."/>
            <person name="Shiraki T."/>
            <person name="Suzuki S."/>
            <person name="Tagami M."/>
            <person name="Waki K."/>
            <person name="Watahiki A."/>
            <person name="Okamura-Oho Y."/>
            <person name="Suzuki H."/>
            <person name="Kawai J."/>
            <person name="Hayashizaki Y."/>
        </authorList>
    </citation>
    <scope>NUCLEOTIDE SEQUENCE [LARGE SCALE MRNA]</scope>
    <source>
        <strain>C57BL/6J</strain>
        <tissue>Mammary gland</tissue>
        <tissue>Tongue</tissue>
    </source>
</reference>
<reference key="3">
    <citation type="journal article" date="2004" name="Genome Res.">
        <title>The status, quality, and expansion of the NIH full-length cDNA project: the Mammalian Gene Collection (MGC).</title>
        <authorList>
            <consortium name="The MGC Project Team"/>
        </authorList>
    </citation>
    <scope>NUCLEOTIDE SEQUENCE [LARGE SCALE MRNA]</scope>
    <source>
        <tissue>Liver</tissue>
    </source>
</reference>
<reference key="4">
    <citation type="journal article" date="2007" name="Proc. Natl. Acad. Sci. U.S.A.">
        <title>Kruppel-like factor 15 is a regulator of cardiomyocyte hypertrophy.</title>
        <authorList>
            <person name="Fisch S."/>
            <person name="Gray S."/>
            <person name="Heymans S."/>
            <person name="Haldar S.M."/>
            <person name="Wang B."/>
            <person name="Pfister O."/>
            <person name="Cui L."/>
            <person name="Kumar A."/>
            <person name="Lin Z."/>
            <person name="Sen-Banerjee S."/>
            <person name="Das H."/>
            <person name="Petersen C.A."/>
            <person name="Mende U."/>
            <person name="Burleigh B.A."/>
            <person name="Zhu Y."/>
            <person name="Pinto Y.M."/>
            <person name="Pinto Y."/>
            <person name="Liao R."/>
            <person name="Jain M.K."/>
        </authorList>
    </citation>
    <scope>FUNCTION AS INHIBITOR OF CARDIAC HYPERTROPHY</scope>
    <scope>FUNCTION AS REPRESSOR OF GATA4 AND MEF2A</scope>
    <scope>DISRUPTION PHENOTYPE</scope>
</reference>
<reference key="5">
    <citation type="journal article" date="2007" name="Proc. Natl. Acad. Sci. U.S.A.">
        <authorList>
            <person name="Fisch S."/>
            <person name="Gray S."/>
            <person name="Heymans S."/>
            <person name="Haldar S.M."/>
            <person name="Wang B."/>
            <person name="Pfister O."/>
            <person name="Cui L."/>
            <person name="Kumar A."/>
            <person name="Lin Z."/>
            <person name="Sen-Banerjee S."/>
            <person name="Das H."/>
            <person name="Petersen C.A."/>
            <person name="Mende U."/>
            <person name="Burleigh B.A."/>
            <person name="Zhu Y."/>
            <person name="Pinto Y.M."/>
            <person name="Pinto Y."/>
            <person name="Liao R."/>
            <person name="Jain M.K."/>
        </authorList>
    </citation>
    <scope>ERRATUM OF PUBMED:17438289</scope>
</reference>
<reference key="6">
    <citation type="journal article" date="2008" name="J. Mol. Cell. Cardiol.">
        <title>The Kruppel-like factor KLF15 inhibits connective tissue growth factor (CTGF) expression in cardiac fibroblasts.</title>
        <authorList>
            <person name="Wang B."/>
            <person name="Haldar S.M."/>
            <person name="Lu Y."/>
            <person name="Ibrahim O.A."/>
            <person name="Fisch S."/>
            <person name="Gray S."/>
            <person name="Leask A."/>
            <person name="Jain M.K."/>
        </authorList>
    </citation>
    <scope>FUNCTION AS INHIBITOR OF CARDIAC FIBROSIS AND CCN2 EXPRESSION</scope>
    <scope>DISRUPTION PHENOTYPE</scope>
</reference>
<reference key="7">
    <citation type="journal article" date="2010" name="J. Biol. Chem.">
        <title>Regulation of cardiac gene expression by KLF15, a repressor of myocardin activity.</title>
        <authorList>
            <person name="Leenders J.J."/>
            <person name="Wijnen W.J."/>
            <person name="Hiller M."/>
            <person name="van der Made I."/>
            <person name="Lentink V."/>
            <person name="van Leeuwen R.E."/>
            <person name="Herias V."/>
            <person name="Pokharel S."/>
            <person name="Heymans S."/>
            <person name="de Windt L.J."/>
            <person name="Hoeydal M.A."/>
            <person name="Pinto Y.M."/>
            <person name="Creemers E.E."/>
        </authorList>
    </citation>
    <scope>FUNCTION AS NEGATIVE REGULATOR OF MYOCD</scope>
    <scope>INTERACTION WITH MYOCD</scope>
</reference>
<reference key="8">
    <citation type="journal article" date="2010" name="Sci. Transl. Med.">
        <title>Klf15 deficiency is a molecular link between heart failure and aortic aneurysm formation.</title>
        <authorList>
            <person name="Haldar S.M."/>
            <person name="Lu Y."/>
            <person name="Jeyaraj D."/>
            <person name="Kawanami D."/>
            <person name="Cui Y."/>
            <person name="Eapen S.J."/>
            <person name="Hao C."/>
            <person name="Li Y."/>
            <person name="Doughman Y.Q."/>
            <person name="Watanabe M."/>
            <person name="Shimizu K."/>
            <person name="Kuivaniemi H."/>
            <person name="Sadoshima J."/>
            <person name="Margulies K.B."/>
            <person name="Cappola T.P."/>
            <person name="Jain M.K."/>
        </authorList>
    </citation>
    <scope>FUNCTION AS NEGATIVE REGULATOR OF TP53 ACETYLATION</scope>
</reference>
<reference key="9">
    <citation type="journal article" date="2012" name="J. Biol. Chem.">
        <title>Kruppel-like factor 15 (KLF15) is a key regulator of podocyte differentiation.</title>
        <authorList>
            <person name="Mallipattu S.K."/>
            <person name="Liu R."/>
            <person name="Zheng F."/>
            <person name="Narla G."/>
            <person name="Ma'ayan A."/>
            <person name="Dikman S."/>
            <person name="Jain M.K."/>
            <person name="Saleem M."/>
            <person name="D'Agati V."/>
            <person name="Klotman P."/>
            <person name="Chuang P.Y."/>
            <person name="He J.C."/>
        </authorList>
    </citation>
    <scope>FUNCTION IN PODOCYTE DIFFERENTIATION</scope>
    <scope>INDUCTION</scope>
</reference>
<reference key="10">
    <citation type="journal article" date="2012" name="Nature">
        <title>Circadian rhythms govern cardiac repolarization and arrhythmogenesis.</title>
        <authorList>
            <person name="Jeyaraj D."/>
            <person name="Haldar S.M."/>
            <person name="Wan X."/>
            <person name="McCauley M.D."/>
            <person name="Ripperger J.A."/>
            <person name="Hu K."/>
            <person name="Lu Y."/>
            <person name="Eapen B.L."/>
            <person name="Sharma N."/>
            <person name="Ficker E."/>
            <person name="Cutler M.J."/>
            <person name="Gulick J."/>
            <person name="Sanbe A."/>
            <person name="Robbins J."/>
            <person name="Demolombe S."/>
            <person name="Kondratov R.V."/>
            <person name="Shea S.A."/>
            <person name="Albrecht U."/>
            <person name="Wehrens X.H."/>
            <person name="Rosenbaum D.S."/>
            <person name="Jain M.K."/>
        </authorList>
    </citation>
    <scope>FUNCTION IN KCNIP2 CIRCADIAN EXPRESSION</scope>
    <scope>INDUCTION</scope>
    <scope>BINDING TO THE KCNIP2 PROMOTER</scope>
</reference>
<reference key="11">
    <citation type="journal article" date="2013" name="J. Clin. Invest.">
        <title>Kruppel-like factor 15 is critical for vascular inflammation.</title>
        <authorList>
            <person name="Lu Y."/>
            <person name="Zhang L."/>
            <person name="Liao X."/>
            <person name="Sangwung P."/>
            <person name="Prosdocimo D.A."/>
            <person name="Zhou G."/>
            <person name="Votruba A.R."/>
            <person name="Brian L."/>
            <person name="Han Y.J."/>
            <person name="Gao H."/>
            <person name="Wang Y."/>
            <person name="Shimizu K."/>
            <person name="Weinert-Stein K."/>
            <person name="Khrestian M."/>
            <person name="Simon D.I."/>
            <person name="Freedman N.J."/>
            <person name="Jain M.K."/>
        </authorList>
    </citation>
    <scope>FUNCTION AS INHIBITOR OF VASCULAR INFLAMMATION</scope>
    <scope>TISSUE SPECIFICITY</scope>
</reference>
<sequence length="415" mass="44253">MVDHLLPVDETFSSPKCSVGYLGDRLASRQPYHMLPSPISEDDSDVSSPCSCASPDSQAFCSCYSAGPGPEAQGSILDFLLSRATLGSGGGSGGIGDSSGPVTWGSWRRASVPVKEEHFCFPEFLSGDTDDVSRPFQPTLEEIEEFLEENMEAEVKEAPENGSRDLETCSQLSAGSHRSHLHPESAGRERCTPPPGGTSGGGAQSAGEGPAHDGPVPVLLQIQPVAVKQEAGTGPASPGQAPESVKVAQLLVNIQGQTFALLPQVVPSSNLNLPSKFVRIAPVPIAAKPIGSGSLGPGPAGLLVGQKFPKNPAAELLKMHKCTFPGCSKMYTKSSHLKAHLRRHTGEKPFACTWPGCGWRFSRSDELSRHRRSHSGVKPYQCPVCEKKFARSDHLSKHIKVHRFPRSSRAVRAIN</sequence>
<gene>
    <name type="primary">Klf15</name>
    <name type="synonym">Cklf</name>
</gene>
<feature type="chain" id="PRO_0000047188" description="Krueppel-like factor 15">
    <location>
        <begin position="1"/>
        <end position="415"/>
    </location>
</feature>
<feature type="zinc finger region" description="C2H2-type 1" evidence="3">
    <location>
        <begin position="320"/>
        <end position="344"/>
    </location>
</feature>
<feature type="zinc finger region" description="C2H2-type 2" evidence="3">
    <location>
        <begin position="350"/>
        <end position="374"/>
    </location>
</feature>
<feature type="zinc finger region" description="C2H2-type 3" evidence="3">
    <location>
        <begin position="380"/>
        <end position="402"/>
    </location>
</feature>
<feature type="region of interest" description="Disordered" evidence="4">
    <location>
        <begin position="172"/>
        <end position="216"/>
    </location>
</feature>
<feature type="short sequence motif" description="9aaTAD" evidence="2">
    <location>
        <begin position="75"/>
        <end position="83"/>
    </location>
</feature>
<feature type="compositionally biased region" description="Basic and acidic residues" evidence="4">
    <location>
        <begin position="181"/>
        <end position="191"/>
    </location>
</feature>
<comment type="function">
    <text evidence="1 5 6 7 8 9 10 11">Transcriptional regulator that binds to the GA element of the CLCNKA promoter (By similarity). Binds to the KCNIP2 promoter and regulates KCNIP2 circadian expression in the heart. Is a repressor of CCN2 expression, involved in the control of cardiac fibrosis. Is also involved in the control of cardiac hypertrophy acting through the inhibition of MEF2A, GATA4 and MYOCD activity. Is a negative regulator of TP53 acetylation. Inhibits NF-kappa-B activation through repression of EP300-dependent RELA acetylation (By similarity). Involved in podocyte differentiation.</text>
</comment>
<comment type="subunit">
    <text evidence="1">Interacts with MYOCD. Interacts with EP300 (By similarity).</text>
</comment>
<comment type="subcellular location">
    <subcellularLocation>
        <location>Nucleus</location>
    </subcellularLocation>
</comment>
<comment type="tissue specificity">
    <text evidence="11">Expressed in aortic smooth muscle cells.</text>
</comment>
<comment type="induction">
    <text evidence="9 10">In the heart, up-regulated by the CLOCK/BMAL1 heterodimer. In podocytes, up-regulated by retinoic acid.</text>
</comment>
<comment type="domain">
    <text evidence="2">The 9aaTAD motif is a transactivation domain present in a large number of yeast and animal transcription factors.</text>
</comment>
<comment type="disruption phenotype">
    <text evidence="5 6">KLF15 null mice are viable, but in response to pressure overload, they develop cardiac hypertrophy and fibrosis.</text>
</comment>
<comment type="similarity">
    <text evidence="12">Belongs to the Sp1 C2H2-type zinc-finger protein family.</text>
</comment>
<evidence type="ECO:0000250" key="1"/>
<evidence type="ECO:0000250" key="2">
    <source>
        <dbReference type="UniProtKB" id="Q9UIH9"/>
    </source>
</evidence>
<evidence type="ECO:0000255" key="3">
    <source>
        <dbReference type="PROSITE-ProRule" id="PRU00042"/>
    </source>
</evidence>
<evidence type="ECO:0000256" key="4">
    <source>
        <dbReference type="SAM" id="MobiDB-lite"/>
    </source>
</evidence>
<evidence type="ECO:0000269" key="5">
    <source>
    </source>
</evidence>
<evidence type="ECO:0000269" key="6">
    <source>
    </source>
</evidence>
<evidence type="ECO:0000269" key="7">
    <source>
    </source>
</evidence>
<evidence type="ECO:0000269" key="8">
    <source>
    </source>
</evidence>
<evidence type="ECO:0000269" key="9">
    <source>
    </source>
</evidence>
<evidence type="ECO:0000269" key="10">
    <source>
    </source>
</evidence>
<evidence type="ECO:0000269" key="11">
    <source>
    </source>
</evidence>
<evidence type="ECO:0000305" key="12"/>
<protein>
    <recommendedName>
        <fullName>Krueppel-like factor 15</fullName>
    </recommendedName>
    <alternativeName>
        <fullName>Cardiovascular Krueppel-like factor</fullName>
    </alternativeName>
</protein>